<reference key="1">
    <citation type="journal article" date="2009" name="J. Bacteriol.">
        <title>Complete genome sequence of Rhodobacter sphaeroides KD131.</title>
        <authorList>
            <person name="Lim S.-K."/>
            <person name="Kim S.J."/>
            <person name="Cha S.H."/>
            <person name="Oh Y.-K."/>
            <person name="Rhee H.-J."/>
            <person name="Kim M.-S."/>
            <person name="Lee J.K."/>
        </authorList>
    </citation>
    <scope>NUCLEOTIDE SEQUENCE [LARGE SCALE GENOMIC DNA]</scope>
    <source>
        <strain>KD131 / KCTC 12085</strain>
    </source>
</reference>
<accession>B9KU72</accession>
<gene>
    <name evidence="1" type="primary">gvpA</name>
    <name type="ordered locus">RSKD131_3740</name>
</gene>
<sequence>MAIEKSVASASIAEVIDRILDKGVVIDAFVRVSLVGIELIAIEVRAVVASIETWLKYAEAVGLTVDPATT</sequence>
<keyword id="KW-0304">Gas vesicle</keyword>
<organism>
    <name type="scientific">Cereibacter sphaeroides (strain KD131 / KCTC 12085)</name>
    <name type="common">Rhodobacter sphaeroides</name>
    <dbReference type="NCBI Taxonomy" id="557760"/>
    <lineage>
        <taxon>Bacteria</taxon>
        <taxon>Pseudomonadati</taxon>
        <taxon>Pseudomonadota</taxon>
        <taxon>Alphaproteobacteria</taxon>
        <taxon>Rhodobacterales</taxon>
        <taxon>Paracoccaceae</taxon>
        <taxon>Cereibacter</taxon>
    </lineage>
</organism>
<feature type="chain" id="PRO_1000190253" description="Gas vesicle protein A">
    <location>
        <begin position="1"/>
        <end position="70"/>
    </location>
</feature>
<name>GVPA_CERSK</name>
<protein>
    <recommendedName>
        <fullName evidence="1">Gas vesicle protein A</fullName>
        <shortName evidence="1 2">GvpA</shortName>
    </recommendedName>
</protein>
<evidence type="ECO:0000255" key="1">
    <source>
        <dbReference type="HAMAP-Rule" id="MF_00576"/>
    </source>
</evidence>
<evidence type="ECO:0000303" key="2">
    <source>
    </source>
</evidence>
<dbReference type="EMBL" id="CP001151">
    <property type="protein sequence ID" value="ACM03600.1"/>
    <property type="molecule type" value="Genomic_DNA"/>
</dbReference>
<dbReference type="RefSeq" id="WP_002724507.1">
    <property type="nucleotide sequence ID" value="NC_011958.1"/>
</dbReference>
<dbReference type="SMR" id="B9KU72"/>
<dbReference type="GeneID" id="67449050"/>
<dbReference type="KEGG" id="rsk:RSKD131_3740"/>
<dbReference type="HOGENOM" id="CLU_169045_1_0_5"/>
<dbReference type="GO" id="GO:0033172">
    <property type="term" value="C:gas vesicle shell"/>
    <property type="evidence" value="ECO:0007669"/>
    <property type="project" value="UniProtKB-UniRule"/>
</dbReference>
<dbReference type="GO" id="GO:0012506">
    <property type="term" value="C:vesicle membrane"/>
    <property type="evidence" value="ECO:0007669"/>
    <property type="project" value="InterPro"/>
</dbReference>
<dbReference type="GO" id="GO:0005198">
    <property type="term" value="F:structural molecule activity"/>
    <property type="evidence" value="ECO:0007669"/>
    <property type="project" value="InterPro"/>
</dbReference>
<dbReference type="HAMAP" id="MF_00576">
    <property type="entry name" value="Gas_vesicle_A"/>
    <property type="match status" value="1"/>
</dbReference>
<dbReference type="InterPro" id="IPR000638">
    <property type="entry name" value="Gas-vesicle_GvpA-like"/>
</dbReference>
<dbReference type="InterPro" id="IPR047870">
    <property type="entry name" value="Gas_vesicle_GvpA"/>
</dbReference>
<dbReference type="InterPro" id="IPR050530">
    <property type="entry name" value="GvpA"/>
</dbReference>
<dbReference type="InterPro" id="IPR018493">
    <property type="entry name" value="GvpA-like_CS"/>
</dbReference>
<dbReference type="NCBIfam" id="NF006874">
    <property type="entry name" value="PRK09371.1"/>
    <property type="match status" value="1"/>
</dbReference>
<dbReference type="PANTHER" id="PTHR35344:SF4">
    <property type="entry name" value="GAS VESICLE PROTEIN A1"/>
    <property type="match status" value="1"/>
</dbReference>
<dbReference type="PANTHER" id="PTHR35344">
    <property type="entry name" value="GAS VESICLE STRUCTURAL PROTEIN 2-RELATED"/>
    <property type="match status" value="1"/>
</dbReference>
<dbReference type="Pfam" id="PF00741">
    <property type="entry name" value="Gas_vesicle"/>
    <property type="match status" value="1"/>
</dbReference>
<dbReference type="PROSITE" id="PS00234">
    <property type="entry name" value="GAS_VESICLE_A_1"/>
    <property type="match status" value="1"/>
</dbReference>
<dbReference type="PROSITE" id="PS00669">
    <property type="entry name" value="GAS_VESICLE_A_2"/>
    <property type="match status" value="1"/>
</dbReference>
<proteinExistence type="inferred from homology"/>
<comment type="function">
    <text evidence="1">Gas vesicles are hollow, gas filled proteinaceous nanostructures found in some microorganisms. During planktonic growth they allow positioning of the organism at a favorable depth for light or nutrient acquisition. GvpA forms the protein shell.</text>
</comment>
<comment type="subunit">
    <text evidence="1">The gas vesicle shell is 2 nm thick and consists of a single layer of this protein. It forms helical ribs nearly perpendicular to the long axis of the vesicle.</text>
</comment>
<comment type="subcellular location">
    <subcellularLocation>
        <location evidence="1">Gas vesicle shell</location>
    </subcellularLocation>
</comment>
<comment type="similarity">
    <text evidence="1">Belongs to the gas vesicle GvpA family.</text>
</comment>